<proteinExistence type="inferred from homology"/>
<accession>Q464Z2</accession>
<evidence type="ECO:0000255" key="1">
    <source>
        <dbReference type="HAMAP-Rule" id="MF_00480"/>
    </source>
</evidence>
<evidence type="ECO:0000305" key="2"/>
<protein>
    <recommendedName>
        <fullName evidence="1">Small ribosomal subunit protein uS7</fullName>
    </recommendedName>
    <alternativeName>
        <fullName evidence="2">30S ribosomal protein S7</fullName>
    </alternativeName>
</protein>
<comment type="function">
    <text evidence="1">One of the primary rRNA binding proteins, it binds directly to 16S rRNA where it nucleates assembly of the head domain of the 30S subunit. Is located at the subunit interface close to the decoding center.</text>
</comment>
<comment type="subunit">
    <text evidence="1">Part of the 30S ribosomal subunit.</text>
</comment>
<comment type="similarity">
    <text evidence="1">Belongs to the universal ribosomal protein uS7 family.</text>
</comment>
<sequence length="185" mass="20559">MKIFGKWDPTEVEVRDLGIKRYVSLTPVIVPHSSGKHARQQFNKSEISIVERLANNLMRTEINTGKKQKTLRAVEEAFDIVSKKTKQNPIQVLVDAIANAGPREEVVRLKYGGISVPKAVDTAPQRRVDTALRYISMGTNNAAFKSKRSVAECLATELIGAANRDTKSFAINRKDAKERVAKAAR</sequence>
<name>RS7_METBF</name>
<keyword id="KW-0687">Ribonucleoprotein</keyword>
<keyword id="KW-0689">Ribosomal protein</keyword>
<keyword id="KW-0694">RNA-binding</keyword>
<keyword id="KW-0699">rRNA-binding</keyword>
<gene>
    <name evidence="1" type="primary">rps7</name>
    <name type="ordered locus">Mbar_A3687</name>
</gene>
<feature type="chain" id="PRO_0000226542" description="Small ribosomal subunit protein uS7">
    <location>
        <begin position="1"/>
        <end position="185"/>
    </location>
</feature>
<reference key="1">
    <citation type="journal article" date="2006" name="J. Bacteriol.">
        <title>The Methanosarcina barkeri genome: comparative analysis with Methanosarcina acetivorans and Methanosarcina mazei reveals extensive rearrangement within methanosarcinal genomes.</title>
        <authorList>
            <person name="Maeder D.L."/>
            <person name="Anderson I."/>
            <person name="Brettin T.S."/>
            <person name="Bruce D.C."/>
            <person name="Gilna P."/>
            <person name="Han C.S."/>
            <person name="Lapidus A."/>
            <person name="Metcalf W.W."/>
            <person name="Saunders E."/>
            <person name="Tapia R."/>
            <person name="Sowers K.R."/>
        </authorList>
    </citation>
    <scope>NUCLEOTIDE SEQUENCE [LARGE SCALE GENOMIC DNA]</scope>
    <source>
        <strain>Fusaro / DSM 804</strain>
    </source>
</reference>
<organism>
    <name type="scientific">Methanosarcina barkeri (strain Fusaro / DSM 804)</name>
    <dbReference type="NCBI Taxonomy" id="269797"/>
    <lineage>
        <taxon>Archaea</taxon>
        <taxon>Methanobacteriati</taxon>
        <taxon>Methanobacteriota</taxon>
        <taxon>Stenosarchaea group</taxon>
        <taxon>Methanomicrobia</taxon>
        <taxon>Methanosarcinales</taxon>
        <taxon>Methanosarcinaceae</taxon>
        <taxon>Methanosarcina</taxon>
    </lineage>
</organism>
<dbReference type="EMBL" id="CP000099">
    <property type="protein sequence ID" value="AAZ72550.1"/>
    <property type="molecule type" value="Genomic_DNA"/>
</dbReference>
<dbReference type="SMR" id="Q464Z2"/>
<dbReference type="STRING" id="269797.Mbar_A3687"/>
<dbReference type="PaxDb" id="269797-Mbar_A3687"/>
<dbReference type="KEGG" id="mba:Mbar_A3687"/>
<dbReference type="eggNOG" id="arCOG04254">
    <property type="taxonomic scope" value="Archaea"/>
</dbReference>
<dbReference type="HOGENOM" id="CLU_063975_0_0_2"/>
<dbReference type="GO" id="GO:0015935">
    <property type="term" value="C:small ribosomal subunit"/>
    <property type="evidence" value="ECO:0007669"/>
    <property type="project" value="InterPro"/>
</dbReference>
<dbReference type="GO" id="GO:0019843">
    <property type="term" value="F:rRNA binding"/>
    <property type="evidence" value="ECO:0007669"/>
    <property type="project" value="UniProtKB-UniRule"/>
</dbReference>
<dbReference type="GO" id="GO:0003735">
    <property type="term" value="F:structural constituent of ribosome"/>
    <property type="evidence" value="ECO:0007669"/>
    <property type="project" value="InterPro"/>
</dbReference>
<dbReference type="GO" id="GO:0006412">
    <property type="term" value="P:translation"/>
    <property type="evidence" value="ECO:0007669"/>
    <property type="project" value="UniProtKB-UniRule"/>
</dbReference>
<dbReference type="CDD" id="cd14867">
    <property type="entry name" value="uS7_Eukaryote"/>
    <property type="match status" value="1"/>
</dbReference>
<dbReference type="FunFam" id="1.10.455.10:FF:000016">
    <property type="entry name" value="30S ribosomal protein S7"/>
    <property type="match status" value="1"/>
</dbReference>
<dbReference type="Gene3D" id="1.10.455.10">
    <property type="entry name" value="Ribosomal protein S7 domain"/>
    <property type="match status" value="1"/>
</dbReference>
<dbReference type="HAMAP" id="MF_00480_A">
    <property type="entry name" value="Ribosomal_uS7_A"/>
    <property type="match status" value="1"/>
</dbReference>
<dbReference type="InterPro" id="IPR000235">
    <property type="entry name" value="Ribosomal_uS7"/>
</dbReference>
<dbReference type="InterPro" id="IPR026018">
    <property type="entry name" value="Ribosomal_uS7_arc"/>
</dbReference>
<dbReference type="InterPro" id="IPR023798">
    <property type="entry name" value="Ribosomal_uS7_dom"/>
</dbReference>
<dbReference type="InterPro" id="IPR036823">
    <property type="entry name" value="Ribosomal_uS7_dom_sf"/>
</dbReference>
<dbReference type="InterPro" id="IPR005716">
    <property type="entry name" value="Ribosomal_uS7_euk/arc"/>
</dbReference>
<dbReference type="NCBIfam" id="NF003106">
    <property type="entry name" value="PRK04027.1"/>
    <property type="match status" value="1"/>
</dbReference>
<dbReference type="NCBIfam" id="TIGR01028">
    <property type="entry name" value="uS7_euk_arch"/>
    <property type="match status" value="1"/>
</dbReference>
<dbReference type="PANTHER" id="PTHR11205">
    <property type="entry name" value="RIBOSOMAL PROTEIN S7"/>
    <property type="match status" value="1"/>
</dbReference>
<dbReference type="Pfam" id="PF00177">
    <property type="entry name" value="Ribosomal_S7"/>
    <property type="match status" value="1"/>
</dbReference>
<dbReference type="PIRSF" id="PIRSF002122">
    <property type="entry name" value="RPS7p_RPS7a_RPS5e_RPS7o"/>
    <property type="match status" value="1"/>
</dbReference>
<dbReference type="SUPFAM" id="SSF47973">
    <property type="entry name" value="Ribosomal protein S7"/>
    <property type="match status" value="1"/>
</dbReference>